<reference key="1">
    <citation type="journal article" date="2004" name="Virology">
        <title>Genetic analysis of human H2N2 and early H3N2 influenza viruses, 1957-1972: evidence for genetic divergence and multiple reassortment events.</title>
        <authorList>
            <person name="Lindstrom S.E."/>
            <person name="Cox N.J."/>
            <person name="Klimov A."/>
        </authorList>
    </citation>
    <scope>NUCLEOTIDE SEQUENCE [GENOMIC RNA]</scope>
</reference>
<reference key="2">
    <citation type="journal article" date="2004" name="Virus Res.">
        <title>Assembly and budding of influenza virus.</title>
        <authorList>
            <person name="Nayak D.P."/>
            <person name="Hui E.K."/>
            <person name="Barman S."/>
        </authorList>
    </citation>
    <scope>REVIEW</scope>
</reference>
<reference key="3">
    <citation type="journal article" date="2005" name="N. Engl. J. Med.">
        <title>Neuraminidase inhibitors for influenza.</title>
        <authorList>
            <person name="Moscona A."/>
        </authorList>
    </citation>
    <scope>REVIEW</scope>
</reference>
<reference key="4">
    <citation type="journal article" date="2005" name="Biol. Pharm. Bull.">
        <title>Sialobiology of influenza: molecular mechanism of host range variation of influenza viruses.</title>
        <authorList>
            <person name="Suzuki Y."/>
        </authorList>
    </citation>
    <scope>REVIEW</scope>
</reference>
<dbReference type="EC" id="3.2.1.18" evidence="1"/>
<dbReference type="EMBL" id="AY209932">
    <property type="protein sequence ID" value="AAO46248.1"/>
    <property type="molecule type" value="Genomic_RNA"/>
</dbReference>
<dbReference type="RefSeq" id="YP_308872.1">
    <property type="nucleotide sequence ID" value="NC_007382.1"/>
</dbReference>
<dbReference type="SMR" id="Q6XUA7"/>
<dbReference type="CAZy" id="GH34">
    <property type="family name" value="Glycoside Hydrolase Family 34"/>
</dbReference>
<dbReference type="GlyCosmos" id="Q6XUA7">
    <property type="glycosylation" value="8 sites, No reported glycans"/>
</dbReference>
<dbReference type="GeneID" id="3655112"/>
<dbReference type="KEGG" id="vg:3655112"/>
<dbReference type="OrthoDB" id="2789at10239"/>
<dbReference type="Proteomes" id="UP000200640">
    <property type="component" value="Genome"/>
</dbReference>
<dbReference type="GO" id="GO:0020002">
    <property type="term" value="C:host cell plasma membrane"/>
    <property type="evidence" value="ECO:0007669"/>
    <property type="project" value="UniProtKB-SubCell"/>
</dbReference>
<dbReference type="GO" id="GO:0016020">
    <property type="term" value="C:membrane"/>
    <property type="evidence" value="ECO:0007669"/>
    <property type="project" value="UniProtKB-UniRule"/>
</dbReference>
<dbReference type="GO" id="GO:0055036">
    <property type="term" value="C:virion membrane"/>
    <property type="evidence" value="ECO:0007669"/>
    <property type="project" value="UniProtKB-SubCell"/>
</dbReference>
<dbReference type="GO" id="GO:0004308">
    <property type="term" value="F:exo-alpha-sialidase activity"/>
    <property type="evidence" value="ECO:0007669"/>
    <property type="project" value="UniProtKB-UniRule"/>
</dbReference>
<dbReference type="GO" id="GO:0046872">
    <property type="term" value="F:metal ion binding"/>
    <property type="evidence" value="ECO:0007669"/>
    <property type="project" value="UniProtKB-UniRule"/>
</dbReference>
<dbReference type="GO" id="GO:0005975">
    <property type="term" value="P:carbohydrate metabolic process"/>
    <property type="evidence" value="ECO:0007669"/>
    <property type="project" value="InterPro"/>
</dbReference>
<dbReference type="GO" id="GO:0046761">
    <property type="term" value="P:viral budding from plasma membrane"/>
    <property type="evidence" value="ECO:0007669"/>
    <property type="project" value="UniProtKB-UniRule"/>
</dbReference>
<dbReference type="CDD" id="cd15483">
    <property type="entry name" value="Influenza_NA"/>
    <property type="match status" value="1"/>
</dbReference>
<dbReference type="Gene3D" id="2.120.10.10">
    <property type="match status" value="1"/>
</dbReference>
<dbReference type="HAMAP" id="MF_04071">
    <property type="entry name" value="INFV_NRAM"/>
    <property type="match status" value="1"/>
</dbReference>
<dbReference type="InterPro" id="IPR001860">
    <property type="entry name" value="Glyco_hydro_34"/>
</dbReference>
<dbReference type="InterPro" id="IPR033654">
    <property type="entry name" value="Sialidase_Influenza_A/B"/>
</dbReference>
<dbReference type="InterPro" id="IPR036278">
    <property type="entry name" value="Sialidase_sf"/>
</dbReference>
<dbReference type="Pfam" id="PF00064">
    <property type="entry name" value="Neur"/>
    <property type="match status" value="1"/>
</dbReference>
<dbReference type="SUPFAM" id="SSF50939">
    <property type="entry name" value="Sialidases"/>
    <property type="match status" value="1"/>
</dbReference>
<name>NRAM_I68A5</name>
<sequence length="469" mass="52263">MNPNQKIITIGSVSLTIATVCFLMQIAILVTTVTLHFKQHECDSPASNQVMPCEPIIIERNITEIVYLNNTTIEKEICPEVVEYRNWSKPQCQITGFAPFSKDNSIRLSAGGDIWVTREPYVSCDPGKCYQFALGQGTTLDNKHSNDTIHDRIPHRTLLMNELGVPFHLGTRQVCVAWSSSSCHDGKAWLHVCVTGDDKNATASFIYDGRLMDSIGSWSQNILRTQESECVCINGTCTVVMTDGSASGRADTRILFIEEGKIVHISPLSGSAQHVEECSCYPRYPDVRCICRDNWKGSNRPVIDINMEDYSIDSSYVCSGLVGDTPRNDDRSSNSNCRNPNNERGNPGVKGWAFDNGDDVWMGRTISKDLRSGYETFKVIGGWSTPNSKSQINRQVIVDSNNWSGYSGIFSVEGKRCINRCFYVELIRGRQQETRVWWTSNSIVVFCGTSGTYGTGSWPDGANINFMPI</sequence>
<accession>Q6XUA7</accession>
<protein>
    <recommendedName>
        <fullName evidence="1">Neuraminidase</fullName>
        <ecNumber evidence="1">3.2.1.18</ecNumber>
    </recommendedName>
</protein>
<organismHost>
    <name type="scientific">Aves</name>
    <dbReference type="NCBI Taxonomy" id="8782"/>
</organismHost>
<organismHost>
    <name type="scientific">Homo sapiens</name>
    <name type="common">Human</name>
    <dbReference type="NCBI Taxonomy" id="9606"/>
</organismHost>
<evidence type="ECO:0000255" key="1">
    <source>
        <dbReference type="HAMAP-Rule" id="MF_04071"/>
    </source>
</evidence>
<evidence type="ECO:0000256" key="2">
    <source>
        <dbReference type="SAM" id="MobiDB-lite"/>
    </source>
</evidence>
<gene>
    <name evidence="1" type="primary">NA</name>
</gene>
<feature type="chain" id="PRO_0000280140" description="Neuraminidase">
    <location>
        <begin position="1"/>
        <end position="469"/>
    </location>
</feature>
<feature type="topological domain" description="Intravirion" evidence="1">
    <location>
        <begin position="1"/>
        <end position="9"/>
    </location>
</feature>
<feature type="transmembrane region" description="Helical" evidence="1">
    <location>
        <begin position="10"/>
        <end position="30"/>
    </location>
</feature>
<feature type="topological domain" description="Virion surface" evidence="1">
    <location>
        <begin position="31"/>
        <end position="469"/>
    </location>
</feature>
<feature type="region of interest" description="Involved in apical transport and lipid raft association" evidence="1">
    <location>
        <begin position="11"/>
        <end position="33"/>
    </location>
</feature>
<feature type="region of interest" description="Hypervariable stalk region" evidence="1">
    <location>
        <begin position="36"/>
        <end position="88"/>
    </location>
</feature>
<feature type="region of interest" description="Head of neuraminidase" evidence="1">
    <location>
        <begin position="91"/>
        <end position="469"/>
    </location>
</feature>
<feature type="region of interest" description="Disordered" evidence="2">
    <location>
        <begin position="324"/>
        <end position="350"/>
    </location>
</feature>
<feature type="compositionally biased region" description="Low complexity" evidence="2">
    <location>
        <begin position="333"/>
        <end position="347"/>
    </location>
</feature>
<feature type="active site" description="Proton donor/acceptor" evidence="1">
    <location>
        <position position="151"/>
    </location>
</feature>
<feature type="active site" description="Nucleophile" evidence="1">
    <location>
        <position position="406"/>
    </location>
</feature>
<feature type="binding site" evidence="1">
    <location>
        <position position="118"/>
    </location>
    <ligand>
        <name>substrate</name>
    </ligand>
</feature>
<feature type="binding site" evidence="1">
    <location>
        <position position="152"/>
    </location>
    <ligand>
        <name>substrate</name>
    </ligand>
</feature>
<feature type="binding site" evidence="1">
    <location>
        <begin position="276"/>
        <end position="277"/>
    </location>
    <ligand>
        <name>substrate</name>
    </ligand>
</feature>
<feature type="binding site" evidence="1">
    <location>
        <position position="292"/>
    </location>
    <ligand>
        <name>substrate</name>
    </ligand>
</feature>
<feature type="binding site" evidence="1">
    <location>
        <position position="293"/>
    </location>
    <ligand>
        <name>Ca(2+)</name>
        <dbReference type="ChEBI" id="CHEBI:29108"/>
    </ligand>
</feature>
<feature type="binding site" evidence="1">
    <location>
        <position position="297"/>
    </location>
    <ligand>
        <name>Ca(2+)</name>
        <dbReference type="ChEBI" id="CHEBI:29108"/>
    </ligand>
</feature>
<feature type="binding site" evidence="1">
    <location>
        <position position="324"/>
    </location>
    <ligand>
        <name>Ca(2+)</name>
        <dbReference type="ChEBI" id="CHEBI:29108"/>
    </ligand>
</feature>
<feature type="binding site" evidence="1">
    <location>
        <position position="371"/>
    </location>
    <ligand>
        <name>substrate</name>
    </ligand>
</feature>
<feature type="glycosylation site" description="N-linked (GlcNAc...) asparagine; by host" evidence="1">
    <location>
        <position position="61"/>
    </location>
</feature>
<feature type="glycosylation site" description="N-linked (GlcNAc...) asparagine; by host" evidence="1">
    <location>
        <position position="69"/>
    </location>
</feature>
<feature type="glycosylation site" description="N-linked (GlcNAc...) asparagine; by host" evidence="1">
    <location>
        <position position="70"/>
    </location>
</feature>
<feature type="glycosylation site" description="N-linked (GlcNAc...) asparagine; by host" evidence="1">
    <location>
        <position position="86"/>
    </location>
</feature>
<feature type="glycosylation site" description="N-linked (GlcNAc...) asparagine; by host" evidence="1">
    <location>
        <position position="146"/>
    </location>
</feature>
<feature type="glycosylation site" description="N-linked (GlcNAc...) asparagine; by host" evidence="1">
    <location>
        <position position="200"/>
    </location>
</feature>
<feature type="glycosylation site" description="N-linked (GlcNAc...) asparagine; by host" evidence="1">
    <location>
        <position position="234"/>
    </location>
</feature>
<feature type="glycosylation site" description="N-linked (GlcNAc...) asparagine; by host" evidence="1">
    <location>
        <position position="402"/>
    </location>
</feature>
<feature type="disulfide bond" evidence="1">
    <location>
        <begin position="92"/>
        <end position="417"/>
    </location>
</feature>
<feature type="disulfide bond" evidence="1">
    <location>
        <begin position="124"/>
        <end position="129"/>
    </location>
</feature>
<feature type="disulfide bond" evidence="1">
    <location>
        <begin position="183"/>
        <end position="230"/>
    </location>
</feature>
<feature type="disulfide bond" evidence="1">
    <location>
        <begin position="232"/>
        <end position="237"/>
    </location>
</feature>
<feature type="disulfide bond" evidence="1">
    <location>
        <begin position="278"/>
        <end position="291"/>
    </location>
</feature>
<feature type="disulfide bond" evidence="1">
    <location>
        <begin position="280"/>
        <end position="289"/>
    </location>
</feature>
<feature type="disulfide bond" evidence="1">
    <location>
        <begin position="318"/>
        <end position="337"/>
    </location>
</feature>
<feature type="disulfide bond" evidence="1">
    <location>
        <begin position="421"/>
        <end position="447"/>
    </location>
</feature>
<organism>
    <name type="scientific">Influenza A virus (strain A/Korea/426/1968 H2N2)</name>
    <dbReference type="NCBI Taxonomy" id="488241"/>
    <lineage>
        <taxon>Viruses</taxon>
        <taxon>Riboviria</taxon>
        <taxon>Orthornavirae</taxon>
        <taxon>Negarnaviricota</taxon>
        <taxon>Polyploviricotina</taxon>
        <taxon>Insthoviricetes</taxon>
        <taxon>Articulavirales</taxon>
        <taxon>Orthomyxoviridae</taxon>
        <taxon>Alphainfluenzavirus</taxon>
        <taxon>Alphainfluenzavirus influenzae</taxon>
        <taxon>Influenza A virus</taxon>
    </lineage>
</organism>
<comment type="function">
    <text evidence="1">Catalyzes the removal of terminal sialic acid residues from viral and cellular glycoconjugates. Cleaves off the terminal sialic acids on the glycosylated HA during virus budding to facilitate virus release. Additionally helps virus spread through the circulation by further removing sialic acids from the cell surface. These cleavages prevent self-aggregation and ensure the efficient spread of the progeny virus from cell to cell. Otherwise, infection would be limited to one round of replication. Described as a receptor-destroying enzyme because it cleaves a terminal sialic acid from the cellular receptors. May facilitate viral invasion of the upper airways by cleaving the sialic acid moieties on the mucin of the airway epithelial cells. Likely to plays a role in the budding process through its association with lipid rafts during intracellular transport. May additionally display a raft-association independent effect on budding. Plays a role in the determination of host range restriction on replication and virulence. Sialidase activity in late endosome/lysosome traffic seems to enhance virus replication.</text>
</comment>
<comment type="catalytic activity">
    <reaction evidence="1">
        <text>Hydrolysis of alpha-(2-&gt;3)-, alpha-(2-&gt;6)-, alpha-(2-&gt;8)- glycosidic linkages of terminal sialic acid residues in oligosaccharides, glycoproteins, glycolipids, colominic acid and synthetic substrates.</text>
        <dbReference type="EC" id="3.2.1.18"/>
    </reaction>
</comment>
<comment type="cofactor">
    <cofactor evidence="1">
        <name>Ca(2+)</name>
        <dbReference type="ChEBI" id="CHEBI:29108"/>
    </cofactor>
</comment>
<comment type="activity regulation">
    <text evidence="1">Inhibited by the neuraminidase inhibitors zanamivir (Relenza) and oseltamivir (Tamiflu). These drugs interfere with the release of progeny virus from infected cells and are effective against all influenza strains. Resistance to neuraminidase inhibitors is quite rare.</text>
</comment>
<comment type="subunit">
    <text evidence="1">Homotetramer.</text>
</comment>
<comment type="subcellular location">
    <subcellularLocation>
        <location evidence="1">Virion membrane</location>
    </subcellularLocation>
    <subcellularLocation>
        <location evidence="1">Host apical cell membrane</location>
        <topology evidence="1">Single-pass type II membrane protein</topology>
    </subcellularLocation>
    <text evidence="1">Preferentially accumulates at the apical plasma membrane in infected polarized epithelial cells, which is the virus assembly site. Uses lipid rafts for cell surface transport and apical sorting. In the virion, forms a mushroom-shaped spike on the surface of the membrane.</text>
</comment>
<comment type="domain">
    <text evidence="1">Intact N-terminus is essential for virion morphogenesis. Possesses two apical sorting signals, one in the ectodomain, which is likely to be a glycan, and the other in the transmembrane domain. The transmembrane domain also plays a role in lipid raft association.</text>
</comment>
<comment type="PTM">
    <text evidence="1">N-glycosylated.</text>
</comment>
<comment type="miscellaneous">
    <text>The influenza A genome consist of 8 RNA segments. Genetic variation of hemagglutinin and/or neuraminidase genes results in the emergence of new influenza strains. The mechanism of variation can be the result of point mutations or the result of genetic reassortment between segments of two different strains.</text>
</comment>
<comment type="similarity">
    <text evidence="1">Belongs to the glycosyl hydrolase 34 family.</text>
</comment>
<proteinExistence type="inferred from homology"/>
<keyword id="KW-0106">Calcium</keyword>
<keyword id="KW-1015">Disulfide bond</keyword>
<keyword id="KW-0325">Glycoprotein</keyword>
<keyword id="KW-0326">Glycosidase</keyword>
<keyword id="KW-1032">Host cell membrane</keyword>
<keyword id="KW-1043">Host membrane</keyword>
<keyword id="KW-0378">Hydrolase</keyword>
<keyword id="KW-0472">Membrane</keyword>
<keyword id="KW-0479">Metal-binding</keyword>
<keyword id="KW-0735">Signal-anchor</keyword>
<keyword id="KW-0812">Transmembrane</keyword>
<keyword id="KW-1133">Transmembrane helix</keyword>
<keyword id="KW-0946">Virion</keyword>